<sequence length="255" mass="28306">MNINKIALIYNQNSKHLAIIEEIKKLYNYCKIEEAEAIIVIGGDGALLHNIHRYMHLNIPFYGVNLGNLGFLMNPLDTKNLSQNIHESTVSILNPLLMQAEDISGQIYTALAINEVSIFRKTNQAAKFRIDVNGIERMSELVADGALIATPAGSSAYNLSAGGPILPLESNMLCLTPICSFRPRRWHGALLLASATIQFKILNTNKRPVNATADFQEFNNITNVTVKSTTDTPIKLLFNKNHTLEDRIIKEQFGG</sequence>
<gene>
    <name evidence="1" type="primary">nadK</name>
    <name type="ordered locus">A1C_03295</name>
</gene>
<proteinExistence type="inferred from homology"/>
<reference key="1">
    <citation type="submission" date="2007-09" db="EMBL/GenBank/DDBJ databases">
        <title>Complete genome sequence of Rickettsia akari.</title>
        <authorList>
            <person name="Madan A."/>
            <person name="Fahey J."/>
            <person name="Helton E."/>
            <person name="Ketteman M."/>
            <person name="Madan A."/>
            <person name="Rodrigues S."/>
            <person name="Sanchez A."/>
            <person name="Whiting M."/>
            <person name="Dasch G."/>
            <person name="Eremeeva M."/>
        </authorList>
    </citation>
    <scope>NUCLEOTIDE SEQUENCE [LARGE SCALE GENOMIC DNA]</scope>
    <source>
        <strain>Hartford</strain>
    </source>
</reference>
<feature type="chain" id="PRO_1000005438" description="NAD kinase">
    <location>
        <begin position="1"/>
        <end position="255"/>
    </location>
</feature>
<feature type="active site" description="Proton acceptor" evidence="1">
    <location>
        <position position="44"/>
    </location>
</feature>
<feature type="binding site" evidence="1">
    <location>
        <begin position="44"/>
        <end position="45"/>
    </location>
    <ligand>
        <name>NAD(+)</name>
        <dbReference type="ChEBI" id="CHEBI:57540"/>
    </ligand>
</feature>
<feature type="binding site" evidence="1">
    <location>
        <position position="49"/>
    </location>
    <ligand>
        <name>NAD(+)</name>
        <dbReference type="ChEBI" id="CHEBI:57540"/>
    </ligand>
</feature>
<feature type="binding site" evidence="1">
    <location>
        <begin position="114"/>
        <end position="115"/>
    </location>
    <ligand>
        <name>NAD(+)</name>
        <dbReference type="ChEBI" id="CHEBI:57540"/>
    </ligand>
</feature>
<feature type="binding site" evidence="1">
    <location>
        <position position="144"/>
    </location>
    <ligand>
        <name>NAD(+)</name>
        <dbReference type="ChEBI" id="CHEBI:57540"/>
    </ligand>
</feature>
<feature type="binding site" evidence="1">
    <location>
        <position position="152"/>
    </location>
    <ligand>
        <name>NAD(+)</name>
        <dbReference type="ChEBI" id="CHEBI:57540"/>
    </ligand>
</feature>
<feature type="binding site" evidence="1">
    <location>
        <begin position="155"/>
        <end position="160"/>
    </location>
    <ligand>
        <name>NAD(+)</name>
        <dbReference type="ChEBI" id="CHEBI:57540"/>
    </ligand>
</feature>
<feature type="binding site" evidence="1">
    <location>
        <position position="216"/>
    </location>
    <ligand>
        <name>NAD(+)</name>
        <dbReference type="ChEBI" id="CHEBI:57540"/>
    </ligand>
</feature>
<name>NADK_RICAH</name>
<protein>
    <recommendedName>
        <fullName evidence="1">NAD kinase</fullName>
        <ecNumber evidence="1">2.7.1.23</ecNumber>
    </recommendedName>
    <alternativeName>
        <fullName evidence="1">ATP-dependent NAD kinase</fullName>
    </alternativeName>
</protein>
<comment type="function">
    <text evidence="1">Involved in the regulation of the intracellular balance of NAD and NADP, and is a key enzyme in the biosynthesis of NADP. Catalyzes specifically the phosphorylation on 2'-hydroxyl of the adenosine moiety of NAD to yield NADP.</text>
</comment>
<comment type="catalytic activity">
    <reaction evidence="1">
        <text>NAD(+) + ATP = ADP + NADP(+) + H(+)</text>
        <dbReference type="Rhea" id="RHEA:18629"/>
        <dbReference type="ChEBI" id="CHEBI:15378"/>
        <dbReference type="ChEBI" id="CHEBI:30616"/>
        <dbReference type="ChEBI" id="CHEBI:57540"/>
        <dbReference type="ChEBI" id="CHEBI:58349"/>
        <dbReference type="ChEBI" id="CHEBI:456216"/>
        <dbReference type="EC" id="2.7.1.23"/>
    </reaction>
</comment>
<comment type="cofactor">
    <cofactor evidence="1">
        <name>a divalent metal cation</name>
        <dbReference type="ChEBI" id="CHEBI:60240"/>
    </cofactor>
</comment>
<comment type="subcellular location">
    <subcellularLocation>
        <location evidence="1">Cytoplasm</location>
    </subcellularLocation>
</comment>
<comment type="similarity">
    <text evidence="1">Belongs to the NAD kinase family.</text>
</comment>
<accession>A8GNH0</accession>
<dbReference type="EC" id="2.7.1.23" evidence="1"/>
<dbReference type="EMBL" id="CP000847">
    <property type="protein sequence ID" value="ABV74945.1"/>
    <property type="molecule type" value="Genomic_DNA"/>
</dbReference>
<dbReference type="RefSeq" id="WP_012149578.1">
    <property type="nucleotide sequence ID" value="NC_009881.1"/>
</dbReference>
<dbReference type="SMR" id="A8GNH0"/>
<dbReference type="STRING" id="293614.A1C_03295"/>
<dbReference type="KEGG" id="rak:A1C_03295"/>
<dbReference type="eggNOG" id="COG0061">
    <property type="taxonomic scope" value="Bacteria"/>
</dbReference>
<dbReference type="HOGENOM" id="CLU_073319_0_0_5"/>
<dbReference type="Proteomes" id="UP000006830">
    <property type="component" value="Chromosome"/>
</dbReference>
<dbReference type="GO" id="GO:0005737">
    <property type="term" value="C:cytoplasm"/>
    <property type="evidence" value="ECO:0007669"/>
    <property type="project" value="UniProtKB-SubCell"/>
</dbReference>
<dbReference type="GO" id="GO:0005524">
    <property type="term" value="F:ATP binding"/>
    <property type="evidence" value="ECO:0007669"/>
    <property type="project" value="UniProtKB-KW"/>
</dbReference>
<dbReference type="GO" id="GO:0046872">
    <property type="term" value="F:metal ion binding"/>
    <property type="evidence" value="ECO:0007669"/>
    <property type="project" value="UniProtKB-UniRule"/>
</dbReference>
<dbReference type="GO" id="GO:0051287">
    <property type="term" value="F:NAD binding"/>
    <property type="evidence" value="ECO:0007669"/>
    <property type="project" value="UniProtKB-ARBA"/>
</dbReference>
<dbReference type="GO" id="GO:0003951">
    <property type="term" value="F:NAD+ kinase activity"/>
    <property type="evidence" value="ECO:0007669"/>
    <property type="project" value="UniProtKB-UniRule"/>
</dbReference>
<dbReference type="GO" id="GO:0019674">
    <property type="term" value="P:NAD metabolic process"/>
    <property type="evidence" value="ECO:0007669"/>
    <property type="project" value="InterPro"/>
</dbReference>
<dbReference type="GO" id="GO:0006741">
    <property type="term" value="P:NADP biosynthetic process"/>
    <property type="evidence" value="ECO:0007669"/>
    <property type="project" value="UniProtKB-UniRule"/>
</dbReference>
<dbReference type="Gene3D" id="3.40.50.10330">
    <property type="entry name" value="Probable inorganic polyphosphate/atp-NAD kinase, domain 1"/>
    <property type="match status" value="1"/>
</dbReference>
<dbReference type="Gene3D" id="2.60.200.30">
    <property type="entry name" value="Probable inorganic polyphosphate/atp-NAD kinase, domain 2"/>
    <property type="match status" value="1"/>
</dbReference>
<dbReference type="HAMAP" id="MF_00361">
    <property type="entry name" value="NAD_kinase"/>
    <property type="match status" value="1"/>
</dbReference>
<dbReference type="InterPro" id="IPR017438">
    <property type="entry name" value="ATP-NAD_kinase_N"/>
</dbReference>
<dbReference type="InterPro" id="IPR017437">
    <property type="entry name" value="ATP-NAD_kinase_PpnK-typ_C"/>
</dbReference>
<dbReference type="InterPro" id="IPR016064">
    <property type="entry name" value="NAD/diacylglycerol_kinase_sf"/>
</dbReference>
<dbReference type="InterPro" id="IPR002504">
    <property type="entry name" value="NADK"/>
</dbReference>
<dbReference type="NCBIfam" id="NF003406">
    <property type="entry name" value="PRK04761.1"/>
    <property type="match status" value="1"/>
</dbReference>
<dbReference type="PANTHER" id="PTHR20275">
    <property type="entry name" value="NAD KINASE"/>
    <property type="match status" value="1"/>
</dbReference>
<dbReference type="PANTHER" id="PTHR20275:SF0">
    <property type="entry name" value="NAD KINASE"/>
    <property type="match status" value="1"/>
</dbReference>
<dbReference type="Pfam" id="PF01513">
    <property type="entry name" value="NAD_kinase"/>
    <property type="match status" value="1"/>
</dbReference>
<dbReference type="Pfam" id="PF20143">
    <property type="entry name" value="NAD_kinase_C"/>
    <property type="match status" value="1"/>
</dbReference>
<dbReference type="SUPFAM" id="SSF111331">
    <property type="entry name" value="NAD kinase/diacylglycerol kinase-like"/>
    <property type="match status" value="1"/>
</dbReference>
<keyword id="KW-0067">ATP-binding</keyword>
<keyword id="KW-0963">Cytoplasm</keyword>
<keyword id="KW-0418">Kinase</keyword>
<keyword id="KW-0520">NAD</keyword>
<keyword id="KW-0521">NADP</keyword>
<keyword id="KW-0547">Nucleotide-binding</keyword>
<keyword id="KW-0808">Transferase</keyword>
<organism>
    <name type="scientific">Rickettsia akari (strain Hartford)</name>
    <dbReference type="NCBI Taxonomy" id="293614"/>
    <lineage>
        <taxon>Bacteria</taxon>
        <taxon>Pseudomonadati</taxon>
        <taxon>Pseudomonadota</taxon>
        <taxon>Alphaproteobacteria</taxon>
        <taxon>Rickettsiales</taxon>
        <taxon>Rickettsiaceae</taxon>
        <taxon>Rickettsieae</taxon>
        <taxon>Rickettsia</taxon>
        <taxon>spotted fever group</taxon>
    </lineage>
</organism>
<evidence type="ECO:0000255" key="1">
    <source>
        <dbReference type="HAMAP-Rule" id="MF_00361"/>
    </source>
</evidence>